<proteinExistence type="evidence at protein level"/>
<protein>
    <recommendedName>
        <fullName>Retinoid-inducible serine carboxypeptidase</fullName>
        <ecNumber>3.4.16.-</ecNumber>
    </recommendedName>
    <alternativeName>
        <fullName>Serine carboxypeptidase 1</fullName>
    </alternativeName>
</protein>
<organism>
    <name type="scientific">Homo sapiens</name>
    <name type="common">Human</name>
    <dbReference type="NCBI Taxonomy" id="9606"/>
    <lineage>
        <taxon>Eukaryota</taxon>
        <taxon>Metazoa</taxon>
        <taxon>Chordata</taxon>
        <taxon>Craniata</taxon>
        <taxon>Vertebrata</taxon>
        <taxon>Euteleostomi</taxon>
        <taxon>Mammalia</taxon>
        <taxon>Eutheria</taxon>
        <taxon>Euarchontoglires</taxon>
        <taxon>Primates</taxon>
        <taxon>Haplorrhini</taxon>
        <taxon>Catarrhini</taxon>
        <taxon>Hominidae</taxon>
        <taxon>Homo</taxon>
    </lineage>
</organism>
<sequence>MELALRRSPVPRWLLLLPLLLGLNAGAVIDWPTEEGKEVWDYVTVRKDAYMFWWLYYATNSCKNFSELPLVMWLQGGPGGSSTGFGNFEEIGPLDSDLKPRKTTWLQAASLLFVDNPVGTGFSYVNGSGAYAKDLAMVASDMMVLLKTFFSCHKEFQTVPFYIFSESYGGKMAAGIGLELYKAIQRGTIKCNFAGVALGDSWISPVDSVLSWGPYLYSMSLLEDKGLAEVSKVAEQVLNAVNKGLYREATELWGKAEMIIEQNTDGVNFYNILTKSTPTSTMESSLEFTQSHLVCLCQRHVRHLQRDALSQLMNGPIRKKLKIIPEDQSWGGQATNVFVNMEEDFMKPVISIVDELLEAGINVTVYNGQLDLIVDTMGQEAWVRKLKWPELPKFSQLKWKALYSDPKSLETSAFVKSYKNLAFYWILKAGHMVPSDQGDMALKMMRLVTQQE</sequence>
<feature type="signal peptide" evidence="5">
    <location>
        <begin position="1"/>
        <end position="26"/>
    </location>
</feature>
<feature type="chain" id="PRO_0000004284" description="Retinoid-inducible serine carboxypeptidase">
    <location>
        <begin position="27"/>
        <end position="452"/>
    </location>
</feature>
<feature type="active site" evidence="3">
    <location>
        <position position="167"/>
    </location>
</feature>
<feature type="active site" evidence="3">
    <location>
        <position position="371"/>
    </location>
</feature>
<feature type="active site" evidence="3">
    <location>
        <position position="431"/>
    </location>
</feature>
<feature type="glycosylation site" description="N-linked (GlcNAc...) asparagine" evidence="2">
    <location>
        <position position="64"/>
    </location>
</feature>
<feature type="glycosylation site" description="N-linked (GlcNAc...) asparagine" evidence="4">
    <location>
        <position position="126"/>
    </location>
</feature>
<feature type="glycosylation site" description="N-linked (GlcNAc...) asparagine" evidence="2">
    <location>
        <position position="362"/>
    </location>
</feature>
<feature type="splice variant" id="VSP_008555" description="In isoform 2." evidence="6">
    <original>CL</original>
    <variation>WF</variation>
    <location>
        <begin position="295"/>
        <end position="296"/>
    </location>
</feature>
<feature type="splice variant" id="VSP_008556" description="In isoform 2." evidence="6">
    <location>
        <begin position="297"/>
        <end position="452"/>
    </location>
</feature>
<feature type="sequence variant" id="VAR_048684" description="In dbSNP:rs34108204.">
    <original>L</original>
    <variation>V</variation>
    <location>
        <position position="3"/>
    </location>
</feature>
<feature type="sequence variant" id="VAR_048685" description="In dbSNP:rs16957938.">
    <original>V</original>
    <variation>I</variation>
    <location>
        <position position="241"/>
    </location>
</feature>
<gene>
    <name type="primary">SCPEP1</name>
    <name type="synonym">RISC</name>
    <name type="synonym">SCP1</name>
    <name type="ORF">MSTP034</name>
    <name type="ORF">UNQ265/PRO302</name>
</gene>
<accession>Q9HB40</accession>
<accession>Q96A94</accession>
<accession>Q9H3F0</accession>
<dbReference type="EC" id="3.4.16.-"/>
<dbReference type="EMBL" id="AF282618">
    <property type="protein sequence ID" value="AAG16692.1"/>
    <property type="molecule type" value="mRNA"/>
</dbReference>
<dbReference type="EMBL" id="AY358559">
    <property type="protein sequence ID" value="AAQ88923.1"/>
    <property type="molecule type" value="mRNA"/>
</dbReference>
<dbReference type="EMBL" id="AK027373">
    <property type="protein sequence ID" value="BAB55069.1"/>
    <property type="molecule type" value="mRNA"/>
</dbReference>
<dbReference type="EMBL" id="BC010078">
    <property type="status" value="NOT_ANNOTATED_CDS"/>
    <property type="molecule type" value="mRNA"/>
</dbReference>
<dbReference type="EMBL" id="BC072405">
    <property type="protein sequence ID" value="AAH72405.1"/>
    <property type="molecule type" value="mRNA"/>
</dbReference>
<dbReference type="EMBL" id="AF113214">
    <property type="protein sequence ID" value="AAG39285.1"/>
    <property type="molecule type" value="mRNA"/>
</dbReference>
<dbReference type="CCDS" id="CCDS11593.1">
    <molecule id="Q9HB40-1"/>
</dbReference>
<dbReference type="RefSeq" id="NP_067639.1">
    <molecule id="Q9HB40-1"/>
    <property type="nucleotide sequence ID" value="NM_021626.3"/>
</dbReference>
<dbReference type="SMR" id="Q9HB40"/>
<dbReference type="BioGRID" id="121884">
    <property type="interactions" value="113"/>
</dbReference>
<dbReference type="FunCoup" id="Q9HB40">
    <property type="interactions" value="281"/>
</dbReference>
<dbReference type="IntAct" id="Q9HB40">
    <property type="interactions" value="30"/>
</dbReference>
<dbReference type="STRING" id="9606.ENSP00000262288"/>
<dbReference type="ChEMBL" id="CHEMBL2189131"/>
<dbReference type="DrugBank" id="DB07506">
    <property type="generic name" value="L-BENZYLSUCCINIC ACID"/>
</dbReference>
<dbReference type="ESTHER" id="human-SCPEP1">
    <property type="family name" value="Carboxypeptidase_S10"/>
</dbReference>
<dbReference type="MEROPS" id="S10.013"/>
<dbReference type="GlyConnect" id="1715">
    <property type="glycosylation" value="2 N-Linked glycans (1 site)"/>
</dbReference>
<dbReference type="GlyCosmos" id="Q9HB40">
    <property type="glycosylation" value="5 sites, 3 glycans"/>
</dbReference>
<dbReference type="GlyGen" id="Q9HB40">
    <property type="glycosylation" value="6 sites, 3 N-linked glycans (1 site), 2 O-linked glycans (3 sites)"/>
</dbReference>
<dbReference type="iPTMnet" id="Q9HB40"/>
<dbReference type="PhosphoSitePlus" id="Q9HB40"/>
<dbReference type="SwissPalm" id="Q9HB40"/>
<dbReference type="BioMuta" id="SCPEP1"/>
<dbReference type="DMDM" id="41690765"/>
<dbReference type="jPOST" id="Q9HB40"/>
<dbReference type="MassIVE" id="Q9HB40"/>
<dbReference type="PaxDb" id="9606-ENSP00000262288"/>
<dbReference type="PeptideAtlas" id="Q9HB40"/>
<dbReference type="ProteomicsDB" id="81478">
    <molecule id="Q9HB40-1"/>
</dbReference>
<dbReference type="ProteomicsDB" id="81479">
    <molecule id="Q9HB40-2"/>
</dbReference>
<dbReference type="Pumba" id="Q9HB40"/>
<dbReference type="TopDownProteomics" id="Q9HB40-1">
    <molecule id="Q9HB40-1"/>
</dbReference>
<dbReference type="Antibodypedia" id="30882">
    <property type="antibodies" value="113 antibodies from 21 providers"/>
</dbReference>
<dbReference type="DNASU" id="59342"/>
<dbReference type="Ensembl" id="ENST00000262288.8">
    <molecule id="Q9HB40-1"/>
    <property type="protein sequence ID" value="ENSP00000262288.3"/>
    <property type="gene ID" value="ENSG00000121064.13"/>
</dbReference>
<dbReference type="Ensembl" id="ENST00000576154.5">
    <molecule id="Q9HB40-2"/>
    <property type="protein sequence ID" value="ENSP00000458587.1"/>
    <property type="gene ID" value="ENSG00000121064.13"/>
</dbReference>
<dbReference type="GeneID" id="59342"/>
<dbReference type="KEGG" id="hsa:59342"/>
<dbReference type="MANE-Select" id="ENST00000262288.8">
    <property type="protein sequence ID" value="ENSP00000262288.3"/>
    <property type="RefSeq nucleotide sequence ID" value="NM_021626.3"/>
    <property type="RefSeq protein sequence ID" value="NP_067639.1"/>
</dbReference>
<dbReference type="UCSC" id="uc002iuv.5">
    <molecule id="Q9HB40-1"/>
    <property type="organism name" value="human"/>
</dbReference>
<dbReference type="AGR" id="HGNC:29507"/>
<dbReference type="CTD" id="59342"/>
<dbReference type="DisGeNET" id="59342"/>
<dbReference type="GeneCards" id="SCPEP1"/>
<dbReference type="HGNC" id="HGNC:29507">
    <property type="gene designation" value="SCPEP1"/>
</dbReference>
<dbReference type="HPA" id="ENSG00000121064">
    <property type="expression patterns" value="Tissue enhanced (parathyroid)"/>
</dbReference>
<dbReference type="MIM" id="619723">
    <property type="type" value="gene"/>
</dbReference>
<dbReference type="neXtProt" id="NX_Q9HB40"/>
<dbReference type="OpenTargets" id="ENSG00000121064"/>
<dbReference type="PharmGKB" id="PA134960711"/>
<dbReference type="VEuPathDB" id="HostDB:ENSG00000121064"/>
<dbReference type="eggNOG" id="KOG1283">
    <property type="taxonomic scope" value="Eukaryota"/>
</dbReference>
<dbReference type="GeneTree" id="ENSGT00940000156193"/>
<dbReference type="HOGENOM" id="CLU_008523_1_0_1"/>
<dbReference type="InParanoid" id="Q9HB40"/>
<dbReference type="OMA" id="QEPKEVW"/>
<dbReference type="OrthoDB" id="443318at2759"/>
<dbReference type="PAN-GO" id="Q9HB40">
    <property type="GO annotations" value="1 GO annotation based on evolutionary models"/>
</dbReference>
<dbReference type="PhylomeDB" id="Q9HB40"/>
<dbReference type="TreeFam" id="TF313740"/>
<dbReference type="PathwayCommons" id="Q9HB40"/>
<dbReference type="SignaLink" id="Q9HB40"/>
<dbReference type="BioGRID-ORCS" id="59342">
    <property type="hits" value="18 hits in 1156 CRISPR screens"/>
</dbReference>
<dbReference type="ChiTaRS" id="SCPEP1">
    <property type="organism name" value="human"/>
</dbReference>
<dbReference type="GeneWiki" id="SCPEP1"/>
<dbReference type="GenomeRNAi" id="59342"/>
<dbReference type="Pharos" id="Q9HB40">
    <property type="development level" value="Tbio"/>
</dbReference>
<dbReference type="PRO" id="PR:Q9HB40"/>
<dbReference type="Proteomes" id="UP000005640">
    <property type="component" value="Chromosome 17"/>
</dbReference>
<dbReference type="RNAct" id="Q9HB40">
    <property type="molecule type" value="protein"/>
</dbReference>
<dbReference type="Bgee" id="ENSG00000121064">
    <property type="expression patterns" value="Expressed in right adrenal gland cortex and 199 other cell types or tissues"/>
</dbReference>
<dbReference type="ExpressionAtlas" id="Q9HB40">
    <property type="expression patterns" value="baseline and differential"/>
</dbReference>
<dbReference type="GO" id="GO:0070062">
    <property type="term" value="C:extracellular exosome"/>
    <property type="evidence" value="ECO:0007005"/>
    <property type="project" value="UniProtKB"/>
</dbReference>
<dbReference type="GO" id="GO:0004185">
    <property type="term" value="F:serine-type carboxypeptidase activity"/>
    <property type="evidence" value="ECO:0000250"/>
    <property type="project" value="CAFA"/>
</dbReference>
<dbReference type="GO" id="GO:0097746">
    <property type="term" value="P:blood vessel diameter maintenance"/>
    <property type="evidence" value="ECO:0000250"/>
    <property type="project" value="CAFA"/>
</dbReference>
<dbReference type="GO" id="GO:0045776">
    <property type="term" value="P:negative regulation of blood pressure"/>
    <property type="evidence" value="ECO:0000250"/>
    <property type="project" value="CAFA"/>
</dbReference>
<dbReference type="GO" id="GO:0006508">
    <property type="term" value="P:proteolysis"/>
    <property type="evidence" value="ECO:0007669"/>
    <property type="project" value="UniProtKB-KW"/>
</dbReference>
<dbReference type="GO" id="GO:0042573">
    <property type="term" value="P:retinoic acid metabolic process"/>
    <property type="evidence" value="ECO:0000250"/>
    <property type="project" value="UniProtKB"/>
</dbReference>
<dbReference type="FunFam" id="3.40.50.1820:FF:000075">
    <property type="entry name" value="Carboxypeptidase"/>
    <property type="match status" value="1"/>
</dbReference>
<dbReference type="Gene3D" id="3.40.50.1820">
    <property type="entry name" value="alpha/beta hydrolase"/>
    <property type="match status" value="1"/>
</dbReference>
<dbReference type="InterPro" id="IPR029058">
    <property type="entry name" value="AB_hydrolase_fold"/>
</dbReference>
<dbReference type="InterPro" id="IPR001563">
    <property type="entry name" value="Peptidase_S10"/>
</dbReference>
<dbReference type="InterPro" id="IPR018202">
    <property type="entry name" value="Ser_caboxypep_ser_AS"/>
</dbReference>
<dbReference type="PANTHER" id="PTHR11802:SF3">
    <property type="entry name" value="RETINOID-INDUCIBLE SERINE CARBOXYPEPTIDASE"/>
    <property type="match status" value="1"/>
</dbReference>
<dbReference type="PANTHER" id="PTHR11802">
    <property type="entry name" value="SERINE PROTEASE FAMILY S10 SERINE CARBOXYPEPTIDASE"/>
    <property type="match status" value="1"/>
</dbReference>
<dbReference type="Pfam" id="PF00450">
    <property type="entry name" value="Peptidase_S10"/>
    <property type="match status" value="1"/>
</dbReference>
<dbReference type="PRINTS" id="PR00724">
    <property type="entry name" value="CRBOXYPTASEC"/>
</dbReference>
<dbReference type="SUPFAM" id="SSF53474">
    <property type="entry name" value="alpha/beta-Hydrolases"/>
    <property type="match status" value="1"/>
</dbReference>
<dbReference type="PROSITE" id="PS00131">
    <property type="entry name" value="CARBOXYPEPT_SER_SER"/>
    <property type="match status" value="1"/>
</dbReference>
<evidence type="ECO:0000250" key="1"/>
<evidence type="ECO:0000255" key="2"/>
<evidence type="ECO:0000255" key="3">
    <source>
        <dbReference type="PROSITE-ProRule" id="PRU10074"/>
    </source>
</evidence>
<evidence type="ECO:0000269" key="4">
    <source>
    </source>
</evidence>
<evidence type="ECO:0000269" key="5">
    <source>
    </source>
</evidence>
<evidence type="ECO:0000303" key="6">
    <source>
    </source>
</evidence>
<evidence type="ECO:0000305" key="7"/>
<keyword id="KW-0025">Alternative splicing</keyword>
<keyword id="KW-0121">Carboxypeptidase</keyword>
<keyword id="KW-0903">Direct protein sequencing</keyword>
<keyword id="KW-0325">Glycoprotein</keyword>
<keyword id="KW-0378">Hydrolase</keyword>
<keyword id="KW-0645">Protease</keyword>
<keyword id="KW-1267">Proteomics identification</keyword>
<keyword id="KW-1185">Reference proteome</keyword>
<keyword id="KW-0964">Secreted</keyword>
<keyword id="KW-0732">Signal</keyword>
<reference key="1">
    <citation type="submission" date="2000-06" db="EMBL/GenBank/DDBJ databases">
        <title>Cloning of novel serine carboxypeptidase precursor.</title>
        <authorList>
            <person name="Cho J.-J."/>
            <person name="Baik H.-H."/>
        </authorList>
    </citation>
    <scope>NUCLEOTIDE SEQUENCE [MRNA] (ISOFORM 1)</scope>
</reference>
<reference key="2">
    <citation type="journal article" date="2003" name="Genome Res.">
        <title>The secreted protein discovery initiative (SPDI), a large-scale effort to identify novel human secreted and transmembrane proteins: a bioinformatics assessment.</title>
        <authorList>
            <person name="Clark H.F."/>
            <person name="Gurney A.L."/>
            <person name="Abaya E."/>
            <person name="Baker K."/>
            <person name="Baldwin D.T."/>
            <person name="Brush J."/>
            <person name="Chen J."/>
            <person name="Chow B."/>
            <person name="Chui C."/>
            <person name="Crowley C."/>
            <person name="Currell B."/>
            <person name="Deuel B."/>
            <person name="Dowd P."/>
            <person name="Eaton D."/>
            <person name="Foster J.S."/>
            <person name="Grimaldi C."/>
            <person name="Gu Q."/>
            <person name="Hass P.E."/>
            <person name="Heldens S."/>
            <person name="Huang A."/>
            <person name="Kim H.S."/>
            <person name="Klimowski L."/>
            <person name="Jin Y."/>
            <person name="Johnson S."/>
            <person name="Lee J."/>
            <person name="Lewis L."/>
            <person name="Liao D."/>
            <person name="Mark M.R."/>
            <person name="Robbie E."/>
            <person name="Sanchez C."/>
            <person name="Schoenfeld J."/>
            <person name="Seshagiri S."/>
            <person name="Simmons L."/>
            <person name="Singh J."/>
            <person name="Smith V."/>
            <person name="Stinson J."/>
            <person name="Vagts A."/>
            <person name="Vandlen R.L."/>
            <person name="Watanabe C."/>
            <person name="Wieand D."/>
            <person name="Woods K."/>
            <person name="Xie M.-H."/>
            <person name="Yansura D.G."/>
            <person name="Yi S."/>
            <person name="Yu G."/>
            <person name="Yuan J."/>
            <person name="Zhang M."/>
            <person name="Zhang Z."/>
            <person name="Goddard A.D."/>
            <person name="Wood W.I."/>
            <person name="Godowski P.J."/>
            <person name="Gray A.M."/>
        </authorList>
    </citation>
    <scope>NUCLEOTIDE SEQUENCE [LARGE SCALE MRNA] (ISOFORM 1)</scope>
</reference>
<reference key="3">
    <citation type="journal article" date="2004" name="Nat. Genet.">
        <title>Complete sequencing and characterization of 21,243 full-length human cDNAs.</title>
        <authorList>
            <person name="Ota T."/>
            <person name="Suzuki Y."/>
            <person name="Nishikawa T."/>
            <person name="Otsuki T."/>
            <person name="Sugiyama T."/>
            <person name="Irie R."/>
            <person name="Wakamatsu A."/>
            <person name="Hayashi K."/>
            <person name="Sato H."/>
            <person name="Nagai K."/>
            <person name="Kimura K."/>
            <person name="Makita H."/>
            <person name="Sekine M."/>
            <person name="Obayashi M."/>
            <person name="Nishi T."/>
            <person name="Shibahara T."/>
            <person name="Tanaka T."/>
            <person name="Ishii S."/>
            <person name="Yamamoto J."/>
            <person name="Saito K."/>
            <person name="Kawai Y."/>
            <person name="Isono Y."/>
            <person name="Nakamura Y."/>
            <person name="Nagahari K."/>
            <person name="Murakami K."/>
            <person name="Yasuda T."/>
            <person name="Iwayanagi T."/>
            <person name="Wagatsuma M."/>
            <person name="Shiratori A."/>
            <person name="Sudo H."/>
            <person name="Hosoiri T."/>
            <person name="Kaku Y."/>
            <person name="Kodaira H."/>
            <person name="Kondo H."/>
            <person name="Sugawara M."/>
            <person name="Takahashi M."/>
            <person name="Kanda K."/>
            <person name="Yokoi T."/>
            <person name="Furuya T."/>
            <person name="Kikkawa E."/>
            <person name="Omura Y."/>
            <person name="Abe K."/>
            <person name="Kamihara K."/>
            <person name="Katsuta N."/>
            <person name="Sato K."/>
            <person name="Tanikawa M."/>
            <person name="Yamazaki M."/>
            <person name="Ninomiya K."/>
            <person name="Ishibashi T."/>
            <person name="Yamashita H."/>
            <person name="Murakawa K."/>
            <person name="Fujimori K."/>
            <person name="Tanai H."/>
            <person name="Kimata M."/>
            <person name="Watanabe M."/>
            <person name="Hiraoka S."/>
            <person name="Chiba Y."/>
            <person name="Ishida S."/>
            <person name="Ono Y."/>
            <person name="Takiguchi S."/>
            <person name="Watanabe S."/>
            <person name="Yosida M."/>
            <person name="Hotuta T."/>
            <person name="Kusano J."/>
            <person name="Kanehori K."/>
            <person name="Takahashi-Fujii A."/>
            <person name="Hara H."/>
            <person name="Tanase T.-O."/>
            <person name="Nomura Y."/>
            <person name="Togiya S."/>
            <person name="Komai F."/>
            <person name="Hara R."/>
            <person name="Takeuchi K."/>
            <person name="Arita M."/>
            <person name="Imose N."/>
            <person name="Musashino K."/>
            <person name="Yuuki H."/>
            <person name="Oshima A."/>
            <person name="Sasaki N."/>
            <person name="Aotsuka S."/>
            <person name="Yoshikawa Y."/>
            <person name="Matsunawa H."/>
            <person name="Ichihara T."/>
            <person name="Shiohata N."/>
            <person name="Sano S."/>
            <person name="Moriya S."/>
            <person name="Momiyama H."/>
            <person name="Satoh N."/>
            <person name="Takami S."/>
            <person name="Terashima Y."/>
            <person name="Suzuki O."/>
            <person name="Nakagawa S."/>
            <person name="Senoh A."/>
            <person name="Mizoguchi H."/>
            <person name="Goto Y."/>
            <person name="Shimizu F."/>
            <person name="Wakebe H."/>
            <person name="Hishigaki H."/>
            <person name="Watanabe T."/>
            <person name="Sugiyama A."/>
            <person name="Takemoto M."/>
            <person name="Kawakami B."/>
            <person name="Yamazaki M."/>
            <person name="Watanabe K."/>
            <person name="Kumagai A."/>
            <person name="Itakura S."/>
            <person name="Fukuzumi Y."/>
            <person name="Fujimori Y."/>
            <person name="Komiyama M."/>
            <person name="Tashiro H."/>
            <person name="Tanigami A."/>
            <person name="Fujiwara T."/>
            <person name="Ono T."/>
            <person name="Yamada K."/>
            <person name="Fujii Y."/>
            <person name="Ozaki K."/>
            <person name="Hirao M."/>
            <person name="Ohmori Y."/>
            <person name="Kawabata A."/>
            <person name="Hikiji T."/>
            <person name="Kobatake N."/>
            <person name="Inagaki H."/>
            <person name="Ikema Y."/>
            <person name="Okamoto S."/>
            <person name="Okitani R."/>
            <person name="Kawakami T."/>
            <person name="Noguchi S."/>
            <person name="Itoh T."/>
            <person name="Shigeta K."/>
            <person name="Senba T."/>
            <person name="Matsumura K."/>
            <person name="Nakajima Y."/>
            <person name="Mizuno T."/>
            <person name="Morinaga M."/>
            <person name="Sasaki M."/>
            <person name="Togashi T."/>
            <person name="Oyama M."/>
            <person name="Hata H."/>
            <person name="Watanabe M."/>
            <person name="Komatsu T."/>
            <person name="Mizushima-Sugano J."/>
            <person name="Satoh T."/>
            <person name="Shirai Y."/>
            <person name="Takahashi Y."/>
            <person name="Nakagawa K."/>
            <person name="Okumura K."/>
            <person name="Nagase T."/>
            <person name="Nomura N."/>
            <person name="Kikuchi H."/>
            <person name="Masuho Y."/>
            <person name="Yamashita R."/>
            <person name="Nakai K."/>
            <person name="Yada T."/>
            <person name="Nakamura Y."/>
            <person name="Ohara O."/>
            <person name="Isogai T."/>
            <person name="Sugano S."/>
        </authorList>
    </citation>
    <scope>NUCLEOTIDE SEQUENCE [LARGE SCALE MRNA] (ISOFORM 1)</scope>
    <source>
        <tissue>Mammary gland</tissue>
    </source>
</reference>
<reference key="4">
    <citation type="journal article" date="2004" name="Genome Res.">
        <title>The status, quality, and expansion of the NIH full-length cDNA project: the Mammalian Gene Collection (MGC).</title>
        <authorList>
            <consortium name="The MGC Project Team"/>
        </authorList>
    </citation>
    <scope>NUCLEOTIDE SEQUENCE [LARGE SCALE MRNA] (ISOFORMS 1 AND 2)</scope>
    <source>
        <tissue>Eye</tissue>
        <tissue>Uterus</tissue>
    </source>
</reference>
<reference key="5">
    <citation type="submission" date="1998-12" db="EMBL/GenBank/DDBJ databases">
        <authorList>
            <person name="Liu B."/>
            <person name="Liu Y.Q."/>
            <person name="Wang X.Y."/>
            <person name="Zhao B."/>
            <person name="Sheng H."/>
            <person name="Zhao X.W."/>
            <person name="Liu S."/>
            <person name="Xu Y.Y."/>
            <person name="Ye J."/>
            <person name="Song L."/>
            <person name="Gao Y."/>
            <person name="Zhang C.L."/>
            <person name="Zhang J."/>
            <person name="Wei Y.J."/>
            <person name="Cao H.Q."/>
            <person name="Zhao Y."/>
            <person name="Liu L.S."/>
            <person name="Ding J.F."/>
            <person name="Gao R.L."/>
            <person name="Wu Q.Y."/>
            <person name="Qiang B.Q."/>
            <person name="Yuan J.G."/>
            <person name="Liew C.C."/>
            <person name="Zhao M.S."/>
            <person name="Hui R.T."/>
        </authorList>
    </citation>
    <scope>NUCLEOTIDE SEQUENCE [LARGE SCALE MRNA] OF 9-452 (ISOFORM 1)</scope>
    <source>
        <tissue>Aorta</tissue>
    </source>
</reference>
<reference key="6">
    <citation type="journal article" date="2004" name="Protein Sci.">
        <title>Signal peptide prediction based on analysis of experimentally verified cleavage sites.</title>
        <authorList>
            <person name="Zhang Z."/>
            <person name="Henzel W.J."/>
        </authorList>
    </citation>
    <scope>PROTEIN SEQUENCE OF 27-41</scope>
</reference>
<reference key="7">
    <citation type="journal article" date="2003" name="Nat. Biotechnol.">
        <title>Identification and quantification of N-linked glycoproteins using hydrazide chemistry, stable isotope labeling and mass spectrometry.</title>
        <authorList>
            <person name="Zhang H."/>
            <person name="Li X.-J."/>
            <person name="Martin D.B."/>
            <person name="Aebersold R."/>
        </authorList>
    </citation>
    <scope>GLYCOSYLATION AT ASN-126</scope>
</reference>
<reference key="8">
    <citation type="journal article" date="2011" name="BMC Syst. Biol.">
        <title>Initial characterization of the human central proteome.</title>
        <authorList>
            <person name="Burkard T.R."/>
            <person name="Planyavsky M."/>
            <person name="Kaupe I."/>
            <person name="Breitwieser F.P."/>
            <person name="Buerckstuemmer T."/>
            <person name="Bennett K.L."/>
            <person name="Superti-Furga G."/>
            <person name="Colinge J."/>
        </authorList>
    </citation>
    <scope>IDENTIFICATION BY MASS SPECTROMETRY [LARGE SCALE ANALYSIS]</scope>
</reference>
<reference key="9">
    <citation type="journal article" date="2014" name="J. Proteomics">
        <title>An enzyme assisted RP-RPLC approach for in-depth analysis of human liver phosphoproteome.</title>
        <authorList>
            <person name="Bian Y."/>
            <person name="Song C."/>
            <person name="Cheng K."/>
            <person name="Dong M."/>
            <person name="Wang F."/>
            <person name="Huang J."/>
            <person name="Sun D."/>
            <person name="Wang L."/>
            <person name="Ye M."/>
            <person name="Zou H."/>
        </authorList>
    </citation>
    <scope>IDENTIFICATION BY MASS SPECTROMETRY [LARGE SCALE ANALYSIS]</scope>
    <source>
        <tissue>Liver</tissue>
    </source>
</reference>
<reference key="10">
    <citation type="journal article" date="2015" name="Proteomics">
        <title>N-terminome analysis of the human mitochondrial proteome.</title>
        <authorList>
            <person name="Vaca Jacome A.S."/>
            <person name="Rabilloud T."/>
            <person name="Schaeffer-Reiss C."/>
            <person name="Rompais M."/>
            <person name="Ayoub D."/>
            <person name="Lane L."/>
            <person name="Bairoch A."/>
            <person name="Van Dorsselaer A."/>
            <person name="Carapito C."/>
        </authorList>
    </citation>
    <scope>IDENTIFICATION BY MASS SPECTROMETRY [LARGE SCALE ANALYSIS]</scope>
</reference>
<name>RISC_HUMAN</name>
<comment type="function">
    <text evidence="1">May be involved in vascular wall and kidney homeostasis.</text>
</comment>
<comment type="subcellular location">
    <subcellularLocation>
        <location evidence="7">Secreted</location>
    </subcellularLocation>
</comment>
<comment type="alternative products">
    <event type="alternative splicing"/>
    <isoform>
        <id>Q9HB40-1</id>
        <name>1</name>
        <sequence type="displayed"/>
    </isoform>
    <isoform>
        <id>Q9HB40-2</id>
        <name>2</name>
        <sequence type="described" ref="VSP_008555 VSP_008556"/>
    </isoform>
</comment>
<comment type="miscellaneous">
    <molecule>Isoform 2</molecule>
    <text evidence="7">May be produced at very low levels due to a premature stop codon in the mRNA, leading to nonsense-mediated mRNA decay.</text>
</comment>
<comment type="similarity">
    <text evidence="7">Belongs to the peptidase S10 family.</text>
</comment>